<sequence length="127" mass="14651">MRHRMKRNKLNRYGSHRRSLMRNLAKEIIEHGTIMTTTVKAKVGKEYIEKLITKAVKAYKIKDENKEESIALRRQLFAELGDRKLVNKLVDEIAPKYTGRNGGYTRVIKVGQRRGDGAEVSVLQIVE</sequence>
<evidence type="ECO:0000255" key="1">
    <source>
        <dbReference type="HAMAP-Rule" id="MF_01368"/>
    </source>
</evidence>
<evidence type="ECO:0000305" key="2"/>
<accession>A7HM23</accession>
<comment type="subunit">
    <text evidence="1">Part of the 50S ribosomal subunit. Contacts protein L32.</text>
</comment>
<comment type="similarity">
    <text evidence="1">Belongs to the bacterial ribosomal protein bL17 family.</text>
</comment>
<keyword id="KW-1185">Reference proteome</keyword>
<keyword id="KW-0687">Ribonucleoprotein</keyword>
<keyword id="KW-0689">Ribosomal protein</keyword>
<proteinExistence type="inferred from homology"/>
<gene>
    <name evidence="1" type="primary">rplQ</name>
    <name type="ordered locus">Fnod_1109</name>
</gene>
<feature type="chain" id="PRO_1000073433" description="Large ribosomal subunit protein bL17">
    <location>
        <begin position="1"/>
        <end position="127"/>
    </location>
</feature>
<reference key="1">
    <citation type="submission" date="2007-07" db="EMBL/GenBank/DDBJ databases">
        <title>Complete sequence of Fervidobacterium nodosum Rt17-B1.</title>
        <authorList>
            <consortium name="US DOE Joint Genome Institute"/>
            <person name="Copeland A."/>
            <person name="Lucas S."/>
            <person name="Lapidus A."/>
            <person name="Barry K."/>
            <person name="Glavina del Rio T."/>
            <person name="Dalin E."/>
            <person name="Tice H."/>
            <person name="Pitluck S."/>
            <person name="Saunders E."/>
            <person name="Brettin T."/>
            <person name="Bruce D."/>
            <person name="Detter J.C."/>
            <person name="Han C."/>
            <person name="Schmutz J."/>
            <person name="Larimer F."/>
            <person name="Land M."/>
            <person name="Hauser L."/>
            <person name="Kyrpides N."/>
            <person name="Mikhailova N."/>
            <person name="Nelson K."/>
            <person name="Gogarten J.P."/>
            <person name="Noll K."/>
            <person name="Richardson P."/>
        </authorList>
    </citation>
    <scope>NUCLEOTIDE SEQUENCE [LARGE SCALE GENOMIC DNA]</scope>
    <source>
        <strain>ATCC 35602 / DSM 5306 / Rt17-B1</strain>
    </source>
</reference>
<protein>
    <recommendedName>
        <fullName evidence="1">Large ribosomal subunit protein bL17</fullName>
    </recommendedName>
    <alternativeName>
        <fullName evidence="2">50S ribosomal protein L17</fullName>
    </alternativeName>
</protein>
<name>RL17_FERNB</name>
<organism>
    <name type="scientific">Fervidobacterium nodosum (strain ATCC 35602 / DSM 5306 / Rt17-B1)</name>
    <dbReference type="NCBI Taxonomy" id="381764"/>
    <lineage>
        <taxon>Bacteria</taxon>
        <taxon>Thermotogati</taxon>
        <taxon>Thermotogota</taxon>
        <taxon>Thermotogae</taxon>
        <taxon>Thermotogales</taxon>
        <taxon>Fervidobacteriaceae</taxon>
        <taxon>Fervidobacterium</taxon>
    </lineage>
</organism>
<dbReference type="EMBL" id="CP000771">
    <property type="protein sequence ID" value="ABS60956.1"/>
    <property type="molecule type" value="Genomic_DNA"/>
</dbReference>
<dbReference type="RefSeq" id="WP_011994269.1">
    <property type="nucleotide sequence ID" value="NC_009718.1"/>
</dbReference>
<dbReference type="SMR" id="A7HM23"/>
<dbReference type="STRING" id="381764.Fnod_1109"/>
<dbReference type="KEGG" id="fno:Fnod_1109"/>
<dbReference type="eggNOG" id="COG0203">
    <property type="taxonomic scope" value="Bacteria"/>
</dbReference>
<dbReference type="HOGENOM" id="CLU_074407_2_0_0"/>
<dbReference type="OrthoDB" id="9809073at2"/>
<dbReference type="Proteomes" id="UP000002415">
    <property type="component" value="Chromosome"/>
</dbReference>
<dbReference type="GO" id="GO:0022625">
    <property type="term" value="C:cytosolic large ribosomal subunit"/>
    <property type="evidence" value="ECO:0007669"/>
    <property type="project" value="TreeGrafter"/>
</dbReference>
<dbReference type="GO" id="GO:0003735">
    <property type="term" value="F:structural constituent of ribosome"/>
    <property type="evidence" value="ECO:0007669"/>
    <property type="project" value="InterPro"/>
</dbReference>
<dbReference type="GO" id="GO:0006412">
    <property type="term" value="P:translation"/>
    <property type="evidence" value="ECO:0007669"/>
    <property type="project" value="UniProtKB-UniRule"/>
</dbReference>
<dbReference type="Gene3D" id="3.90.1030.10">
    <property type="entry name" value="Ribosomal protein L17"/>
    <property type="match status" value="1"/>
</dbReference>
<dbReference type="HAMAP" id="MF_01368">
    <property type="entry name" value="Ribosomal_bL17"/>
    <property type="match status" value="1"/>
</dbReference>
<dbReference type="InterPro" id="IPR000456">
    <property type="entry name" value="Ribosomal_bL17"/>
</dbReference>
<dbReference type="InterPro" id="IPR036373">
    <property type="entry name" value="Ribosomal_bL17_sf"/>
</dbReference>
<dbReference type="NCBIfam" id="TIGR00059">
    <property type="entry name" value="L17"/>
    <property type="match status" value="1"/>
</dbReference>
<dbReference type="PANTHER" id="PTHR14413:SF16">
    <property type="entry name" value="LARGE RIBOSOMAL SUBUNIT PROTEIN BL17M"/>
    <property type="match status" value="1"/>
</dbReference>
<dbReference type="PANTHER" id="PTHR14413">
    <property type="entry name" value="RIBOSOMAL PROTEIN L17"/>
    <property type="match status" value="1"/>
</dbReference>
<dbReference type="Pfam" id="PF01196">
    <property type="entry name" value="Ribosomal_L17"/>
    <property type="match status" value="1"/>
</dbReference>
<dbReference type="SUPFAM" id="SSF64263">
    <property type="entry name" value="Prokaryotic ribosomal protein L17"/>
    <property type="match status" value="1"/>
</dbReference>